<gene>
    <name type="primary">yidC</name>
    <name type="ordered locus">UU602</name>
</gene>
<sequence>MSSVDKQNLTNRMRISVSHFAGASNANSIKKERKKKIFNVLLKVFKIIVYAFFLGIGLYGCFQNMANHWTINSTIVGNGFELGFHVDPILGANDIRFDLIYSGTGPWYPMSDFSFDYGPFYALFVWPIAQILLHFMYATRDWPAGLNAILGLIIILLIIRVITMLISARATIQTERISEIQGKIAEINAKYKDAKDMQSRQKKQMETKELYQKHNVKPLAPFESMIITLPIFLIIYRVVTILRPLKFISIFYIWDLSATPISEIFSNFTTSGWPYIFFLLIIIPVQILSQKIPQLLARKRNRNATTVGAKNKQQLKRVRMTQNIIAIVLAVVVAISASGIGLYWFFNAIFTILQSYIIHVIIMKRRSNSATRIESKLAKLGIS</sequence>
<dbReference type="EMBL" id="AF222894">
    <property type="protein sequence ID" value="AAF31016.1"/>
    <property type="molecule type" value="Genomic_DNA"/>
</dbReference>
<dbReference type="RefSeq" id="WP_006688594.1">
    <property type="nucleotide sequence ID" value="NC_002162.1"/>
</dbReference>
<dbReference type="STRING" id="273119.UU602"/>
<dbReference type="EnsemblBacteria" id="AAF31016">
    <property type="protein sequence ID" value="AAF31016"/>
    <property type="gene ID" value="UU602"/>
</dbReference>
<dbReference type="GeneID" id="29672216"/>
<dbReference type="KEGG" id="uur:UU602"/>
<dbReference type="eggNOG" id="COG0706">
    <property type="taxonomic scope" value="Bacteria"/>
</dbReference>
<dbReference type="HOGENOM" id="CLU_058030_0_0_14"/>
<dbReference type="OrthoDB" id="394558at2"/>
<dbReference type="Proteomes" id="UP000000423">
    <property type="component" value="Chromosome"/>
</dbReference>
<dbReference type="GO" id="GO:0005886">
    <property type="term" value="C:plasma membrane"/>
    <property type="evidence" value="ECO:0007669"/>
    <property type="project" value="UniProtKB-SubCell"/>
</dbReference>
<dbReference type="GO" id="GO:0032977">
    <property type="term" value="F:membrane insertase activity"/>
    <property type="evidence" value="ECO:0007669"/>
    <property type="project" value="InterPro"/>
</dbReference>
<dbReference type="GO" id="GO:0051205">
    <property type="term" value="P:protein insertion into membrane"/>
    <property type="evidence" value="ECO:0007669"/>
    <property type="project" value="TreeGrafter"/>
</dbReference>
<dbReference type="GO" id="GO:0015031">
    <property type="term" value="P:protein transport"/>
    <property type="evidence" value="ECO:0007669"/>
    <property type="project" value="UniProtKB-KW"/>
</dbReference>
<dbReference type="CDD" id="cd20070">
    <property type="entry name" value="5TM_YidC_Alb3"/>
    <property type="match status" value="1"/>
</dbReference>
<dbReference type="InterPro" id="IPR001708">
    <property type="entry name" value="YidC/ALB3/OXA1/COX18"/>
</dbReference>
<dbReference type="InterPro" id="IPR028055">
    <property type="entry name" value="YidC/Oxa/ALB_C"/>
</dbReference>
<dbReference type="InterPro" id="IPR047196">
    <property type="entry name" value="YidC_ALB_C"/>
</dbReference>
<dbReference type="NCBIfam" id="NF002566">
    <property type="entry name" value="PRK02201.1-1"/>
    <property type="match status" value="1"/>
</dbReference>
<dbReference type="NCBIfam" id="TIGR03592">
    <property type="entry name" value="yidC_oxa1_cterm"/>
    <property type="match status" value="1"/>
</dbReference>
<dbReference type="PANTHER" id="PTHR12428:SF65">
    <property type="entry name" value="CYTOCHROME C OXIDASE ASSEMBLY PROTEIN COX18, MITOCHONDRIAL"/>
    <property type="match status" value="1"/>
</dbReference>
<dbReference type="PANTHER" id="PTHR12428">
    <property type="entry name" value="OXA1"/>
    <property type="match status" value="1"/>
</dbReference>
<dbReference type="Pfam" id="PF02096">
    <property type="entry name" value="60KD_IMP"/>
    <property type="match status" value="1"/>
</dbReference>
<keyword id="KW-1003">Cell membrane</keyword>
<keyword id="KW-0143">Chaperone</keyword>
<keyword id="KW-0472">Membrane</keyword>
<keyword id="KW-0653">Protein transport</keyword>
<keyword id="KW-1185">Reference proteome</keyword>
<keyword id="KW-0812">Transmembrane</keyword>
<keyword id="KW-1133">Transmembrane helix</keyword>
<keyword id="KW-0813">Transport</keyword>
<organism>
    <name type="scientific">Ureaplasma parvum serovar 3 (strain ATCC 700970)</name>
    <dbReference type="NCBI Taxonomy" id="273119"/>
    <lineage>
        <taxon>Bacteria</taxon>
        <taxon>Bacillati</taxon>
        <taxon>Mycoplasmatota</taxon>
        <taxon>Mycoplasmoidales</taxon>
        <taxon>Mycoplasmoidaceae</taxon>
        <taxon>Ureaplasma</taxon>
    </lineage>
</organism>
<accession>Q9PPN7</accession>
<comment type="function">
    <text evidence="1">Required for the insertion and/or proper folding and/or complex formation of integral membrane proteins into the membrane. Involved in integration of membrane proteins that insert both dependently and independently of the Sec translocase complex, as well as at least some lipoproteins. Aids folding of multispanning membrane proteins (By similarity).</text>
</comment>
<comment type="subunit">
    <text evidence="1">Interacts with the Sec translocase complex via SecD. Specifically interacts with transmembrane segments of nascent integral membrane proteins during membrane integration (By similarity).</text>
</comment>
<comment type="subcellular location">
    <subcellularLocation>
        <location evidence="1">Cell membrane</location>
        <topology evidence="1">Multi-pass membrane protein</topology>
    </subcellularLocation>
</comment>
<comment type="similarity">
    <text evidence="3">Belongs to the OXA1/ALB3/YidC family. Type 1 subfamily.</text>
</comment>
<evidence type="ECO:0000250" key="1"/>
<evidence type="ECO:0000255" key="2"/>
<evidence type="ECO:0000305" key="3"/>
<name>YIDC_UREPA</name>
<reference key="1">
    <citation type="journal article" date="2000" name="Nature">
        <title>The complete sequence of the mucosal pathogen Ureaplasma urealyticum.</title>
        <authorList>
            <person name="Glass J.I."/>
            <person name="Lefkowitz E.J."/>
            <person name="Glass J.S."/>
            <person name="Heiner C.R."/>
            <person name="Chen E.Y."/>
            <person name="Cassell G.H."/>
        </authorList>
    </citation>
    <scope>NUCLEOTIDE SEQUENCE [LARGE SCALE GENOMIC DNA]</scope>
    <source>
        <strain>ATCC 700970</strain>
    </source>
</reference>
<feature type="chain" id="PRO_0000124764" description="Membrane protein insertase YidC">
    <location>
        <begin position="1"/>
        <end position="383"/>
    </location>
</feature>
<feature type="transmembrane region" description="Helical" evidence="2">
    <location>
        <begin position="40"/>
        <end position="60"/>
    </location>
</feature>
<feature type="transmembrane region" description="Helical" evidence="2">
    <location>
        <begin position="118"/>
        <end position="138"/>
    </location>
</feature>
<feature type="transmembrane region" description="Helical" evidence="2">
    <location>
        <begin position="148"/>
        <end position="168"/>
    </location>
</feature>
<feature type="transmembrane region" description="Helical" evidence="2">
    <location>
        <begin position="222"/>
        <end position="242"/>
    </location>
</feature>
<feature type="transmembrane region" description="Helical" evidence="2">
    <location>
        <begin position="245"/>
        <end position="265"/>
    </location>
</feature>
<feature type="transmembrane region" description="Helical" evidence="2">
    <location>
        <begin position="268"/>
        <end position="288"/>
    </location>
</feature>
<feature type="transmembrane region" description="Helical" evidence="2">
    <location>
        <begin position="324"/>
        <end position="344"/>
    </location>
</feature>
<feature type="transmembrane region" description="Helical" evidence="2">
    <location>
        <begin position="345"/>
        <end position="365"/>
    </location>
</feature>
<proteinExistence type="inferred from homology"/>
<protein>
    <recommendedName>
        <fullName>Membrane protein insertase YidC</fullName>
    </recommendedName>
    <alternativeName>
        <fullName>Foldase YidC</fullName>
    </alternativeName>
    <alternativeName>
        <fullName>Membrane integrase YidC</fullName>
    </alternativeName>
    <alternativeName>
        <fullName>Membrane protein YidC</fullName>
    </alternativeName>
</protein>